<gene>
    <name type="ordered locus">RF_1158</name>
</gene>
<sequence length="148" mass="16303">MNDPKQIEKLYKLIAAGEGFNPNSPLGSMMVETQALTKKFAVISFFGAVEKRELDMIKTFVEKGEIDINVKNLVPQGLILTRPTTALGIAIAQGNSEEVIKYLLANGADPKLAFDDFKKSANIDGINQLIKIAPDMIACRKKYMNLNN</sequence>
<keyword id="KW-0040">ANK repeat</keyword>
<accession>Q4UJM2</accession>
<reference key="1">
    <citation type="journal article" date="2005" name="PLoS Biol.">
        <title>The genome sequence of Rickettsia felis identifies the first putative conjugative plasmid in an obligate intracellular parasite.</title>
        <authorList>
            <person name="Ogata H."/>
            <person name="Renesto P."/>
            <person name="Audic S."/>
            <person name="Robert C."/>
            <person name="Blanc G."/>
            <person name="Fournier P.-E."/>
            <person name="Parinello H."/>
            <person name="Claverie J.-M."/>
            <person name="Raoult D."/>
        </authorList>
    </citation>
    <scope>NUCLEOTIDE SEQUENCE [LARGE SCALE GENOMIC DNA]</scope>
    <source>
        <strain>ATCC VR-1525 / URRWXCal2</strain>
    </source>
</reference>
<protein>
    <recommendedName>
        <fullName>Putative ankyrin repeat protein RF_1158</fullName>
    </recommendedName>
</protein>
<name>Y1158_RICFE</name>
<organism>
    <name type="scientific">Rickettsia felis (strain ATCC VR-1525 / URRWXCal2)</name>
    <name type="common">Rickettsia azadi</name>
    <dbReference type="NCBI Taxonomy" id="315456"/>
    <lineage>
        <taxon>Bacteria</taxon>
        <taxon>Pseudomonadati</taxon>
        <taxon>Pseudomonadota</taxon>
        <taxon>Alphaproteobacteria</taxon>
        <taxon>Rickettsiales</taxon>
        <taxon>Rickettsiaceae</taxon>
        <taxon>Rickettsieae</taxon>
        <taxon>Rickettsia</taxon>
        <taxon>spotted fever group</taxon>
    </lineage>
</organism>
<proteinExistence type="predicted"/>
<dbReference type="EMBL" id="CP000053">
    <property type="protein sequence ID" value="AAY62009.1"/>
    <property type="molecule type" value="Genomic_DNA"/>
</dbReference>
<dbReference type="KEGG" id="rfe:RF_1158"/>
<dbReference type="HOGENOM" id="CLU_1757427_0_0_5"/>
<dbReference type="OrthoDB" id="2575953at2"/>
<dbReference type="Proteomes" id="UP000008548">
    <property type="component" value="Chromosome"/>
</dbReference>
<dbReference type="Gene3D" id="1.25.40.20">
    <property type="entry name" value="Ankyrin repeat-containing domain"/>
    <property type="match status" value="1"/>
</dbReference>
<dbReference type="InterPro" id="IPR002110">
    <property type="entry name" value="Ankyrin_rpt"/>
</dbReference>
<dbReference type="InterPro" id="IPR036770">
    <property type="entry name" value="Ankyrin_rpt-contain_sf"/>
</dbReference>
<dbReference type="Pfam" id="PF13606">
    <property type="entry name" value="Ank_3"/>
    <property type="match status" value="1"/>
</dbReference>
<dbReference type="SUPFAM" id="SSF48403">
    <property type="entry name" value="Ankyrin repeat"/>
    <property type="match status" value="1"/>
</dbReference>
<dbReference type="PROSITE" id="PS50297">
    <property type="entry name" value="ANK_REP_REGION"/>
    <property type="match status" value="1"/>
</dbReference>
<dbReference type="PROSITE" id="PS50088">
    <property type="entry name" value="ANK_REPEAT"/>
    <property type="match status" value="1"/>
</dbReference>
<feature type="chain" id="PRO_0000281762" description="Putative ankyrin repeat protein RF_1158">
    <location>
        <begin position="1"/>
        <end position="148"/>
    </location>
</feature>
<feature type="repeat" description="ANK">
    <location>
        <begin position="82"/>
        <end position="115"/>
    </location>
</feature>